<comment type="subcellular location">
    <subcellularLocation>
        <location evidence="2">Cell membrane</location>
        <topology evidence="2">Multi-pass membrane protein</topology>
    </subcellularLocation>
</comment>
<comment type="similarity">
    <text evidence="2">Belongs to the chloride channel (TC 2.A.49) family.</text>
</comment>
<proteinExistence type="inferred from homology"/>
<protein>
    <recommendedName>
        <fullName>Putative ion-transport protein YfeO</fullName>
    </recommendedName>
</protein>
<organism>
    <name type="scientific">Escherichia coli O157:H7</name>
    <dbReference type="NCBI Taxonomy" id="83334"/>
    <lineage>
        <taxon>Bacteria</taxon>
        <taxon>Pseudomonadati</taxon>
        <taxon>Pseudomonadota</taxon>
        <taxon>Gammaproteobacteria</taxon>
        <taxon>Enterobacterales</taxon>
        <taxon>Enterobacteriaceae</taxon>
        <taxon>Escherichia</taxon>
    </lineage>
</organism>
<dbReference type="EMBL" id="AE005174">
    <property type="protein sequence ID" value="AAG57515.1"/>
    <property type="molecule type" value="Genomic_DNA"/>
</dbReference>
<dbReference type="EMBL" id="BA000007">
    <property type="protein sequence ID" value="BAB36692.1"/>
    <property type="molecule type" value="Genomic_DNA"/>
</dbReference>
<dbReference type="PIR" id="E91037">
    <property type="entry name" value="E91037"/>
</dbReference>
<dbReference type="PIR" id="G85881">
    <property type="entry name" value="G85881"/>
</dbReference>
<dbReference type="RefSeq" id="NP_311296.1">
    <property type="nucleotide sequence ID" value="NC_002695.1"/>
</dbReference>
<dbReference type="RefSeq" id="WP_000903148.1">
    <property type="nucleotide sequence ID" value="NZ_VOAI01000001.1"/>
</dbReference>
<dbReference type="SMR" id="P67730"/>
<dbReference type="STRING" id="155864.Z3655"/>
<dbReference type="GeneID" id="915628"/>
<dbReference type="KEGG" id="ece:Z3655"/>
<dbReference type="KEGG" id="ecs:ECs_3269"/>
<dbReference type="PATRIC" id="fig|386585.9.peg.3413"/>
<dbReference type="eggNOG" id="COG0038">
    <property type="taxonomic scope" value="Bacteria"/>
</dbReference>
<dbReference type="HOGENOM" id="CLU_053130_0_0_6"/>
<dbReference type="OMA" id="WKVPGHA"/>
<dbReference type="Proteomes" id="UP000000558">
    <property type="component" value="Chromosome"/>
</dbReference>
<dbReference type="Proteomes" id="UP000002519">
    <property type="component" value="Chromosome"/>
</dbReference>
<dbReference type="GO" id="GO:0005886">
    <property type="term" value="C:plasma membrane"/>
    <property type="evidence" value="ECO:0007669"/>
    <property type="project" value="UniProtKB-SubCell"/>
</dbReference>
<dbReference type="GO" id="GO:0015108">
    <property type="term" value="F:chloride transmembrane transporter activity"/>
    <property type="evidence" value="ECO:0007669"/>
    <property type="project" value="InterPro"/>
</dbReference>
<dbReference type="GO" id="GO:0005216">
    <property type="term" value="F:monoatomic ion channel activity"/>
    <property type="evidence" value="ECO:0007669"/>
    <property type="project" value="UniProtKB-UniRule"/>
</dbReference>
<dbReference type="CDD" id="cd00400">
    <property type="entry name" value="Voltage_gated_ClC"/>
    <property type="match status" value="1"/>
</dbReference>
<dbReference type="FunFam" id="1.10.3080.10:FF:000007">
    <property type="entry name" value="Putative ion-transport protein YfeO"/>
    <property type="match status" value="1"/>
</dbReference>
<dbReference type="Gene3D" id="1.10.3080.10">
    <property type="entry name" value="Clc chloride channel"/>
    <property type="match status" value="1"/>
</dbReference>
<dbReference type="HAMAP" id="MF_01115">
    <property type="entry name" value="CLC_YfeO"/>
    <property type="match status" value="1"/>
</dbReference>
<dbReference type="InterPro" id="IPR022969">
    <property type="entry name" value="Chloride_channel_YfeO"/>
</dbReference>
<dbReference type="InterPro" id="IPR014743">
    <property type="entry name" value="Cl-channel_core"/>
</dbReference>
<dbReference type="InterPro" id="IPR001807">
    <property type="entry name" value="ClC"/>
</dbReference>
<dbReference type="InterPro" id="IPR050368">
    <property type="entry name" value="ClC-type_chloride_channel"/>
</dbReference>
<dbReference type="NCBIfam" id="NF002971">
    <property type="entry name" value="PRK03655.1"/>
    <property type="match status" value="1"/>
</dbReference>
<dbReference type="PANTHER" id="PTHR43427">
    <property type="entry name" value="CHLORIDE CHANNEL PROTEIN CLC-E"/>
    <property type="match status" value="1"/>
</dbReference>
<dbReference type="PANTHER" id="PTHR43427:SF9">
    <property type="entry name" value="ION-TRANSPORT PROTEIN YFEO-RELATED"/>
    <property type="match status" value="1"/>
</dbReference>
<dbReference type="Pfam" id="PF00654">
    <property type="entry name" value="Voltage_CLC"/>
    <property type="match status" value="1"/>
</dbReference>
<dbReference type="PRINTS" id="PR00762">
    <property type="entry name" value="CLCHANNEL"/>
</dbReference>
<dbReference type="SUPFAM" id="SSF81340">
    <property type="entry name" value="Clc chloride channel"/>
    <property type="match status" value="1"/>
</dbReference>
<keyword id="KW-1003">Cell membrane</keyword>
<keyword id="KW-0407">Ion channel</keyword>
<keyword id="KW-0406">Ion transport</keyword>
<keyword id="KW-0472">Membrane</keyword>
<keyword id="KW-1185">Reference proteome</keyword>
<keyword id="KW-0812">Transmembrane</keyword>
<keyword id="KW-1133">Transmembrane helix</keyword>
<keyword id="KW-0813">Transport</keyword>
<reference key="1">
    <citation type="journal article" date="2001" name="Nature">
        <title>Genome sequence of enterohaemorrhagic Escherichia coli O157:H7.</title>
        <authorList>
            <person name="Perna N.T."/>
            <person name="Plunkett G. III"/>
            <person name="Burland V."/>
            <person name="Mau B."/>
            <person name="Glasner J.D."/>
            <person name="Rose D.J."/>
            <person name="Mayhew G.F."/>
            <person name="Evans P.S."/>
            <person name="Gregor J."/>
            <person name="Kirkpatrick H.A."/>
            <person name="Posfai G."/>
            <person name="Hackett J."/>
            <person name="Klink S."/>
            <person name="Boutin A."/>
            <person name="Shao Y."/>
            <person name="Miller L."/>
            <person name="Grotbeck E.J."/>
            <person name="Davis N.W."/>
            <person name="Lim A."/>
            <person name="Dimalanta E.T."/>
            <person name="Potamousis K."/>
            <person name="Apodaca J."/>
            <person name="Anantharaman T.S."/>
            <person name="Lin J."/>
            <person name="Yen G."/>
            <person name="Schwartz D.C."/>
            <person name="Welch R.A."/>
            <person name="Blattner F.R."/>
        </authorList>
    </citation>
    <scope>NUCLEOTIDE SEQUENCE [LARGE SCALE GENOMIC DNA]</scope>
    <source>
        <strain>O157:H7 / EDL933 / ATCC 700927 / EHEC</strain>
    </source>
</reference>
<reference key="2">
    <citation type="journal article" date="2001" name="DNA Res.">
        <title>Complete genome sequence of enterohemorrhagic Escherichia coli O157:H7 and genomic comparison with a laboratory strain K-12.</title>
        <authorList>
            <person name="Hayashi T."/>
            <person name="Makino K."/>
            <person name="Ohnishi M."/>
            <person name="Kurokawa K."/>
            <person name="Ishii K."/>
            <person name="Yokoyama K."/>
            <person name="Han C.-G."/>
            <person name="Ohtsubo E."/>
            <person name="Nakayama K."/>
            <person name="Murata T."/>
            <person name="Tanaka M."/>
            <person name="Tobe T."/>
            <person name="Iida T."/>
            <person name="Takami H."/>
            <person name="Honda T."/>
            <person name="Sasakawa C."/>
            <person name="Ogasawara N."/>
            <person name="Yasunaga T."/>
            <person name="Kuhara S."/>
            <person name="Shiba T."/>
            <person name="Hattori M."/>
            <person name="Shinagawa H."/>
        </authorList>
    </citation>
    <scope>NUCLEOTIDE SEQUENCE [LARGE SCALE GENOMIC DNA]</scope>
    <source>
        <strain>O157:H7 / Sakai / RIMD 0509952 / EHEC</strain>
    </source>
</reference>
<feature type="chain" id="PRO_0000094495" description="Putative ion-transport protein YfeO">
    <location>
        <begin position="1"/>
        <end position="418"/>
    </location>
</feature>
<feature type="transmembrane region" description="Helical" evidence="1">
    <location>
        <begin position="9"/>
        <end position="31"/>
    </location>
</feature>
<feature type="transmembrane region" description="Helical" evidence="1">
    <location>
        <begin position="55"/>
        <end position="77"/>
    </location>
</feature>
<feature type="transmembrane region" description="Helical" evidence="1">
    <location>
        <begin position="90"/>
        <end position="112"/>
    </location>
</feature>
<feature type="transmembrane region" description="Helical" evidence="1">
    <location>
        <begin position="122"/>
        <end position="140"/>
    </location>
</feature>
<feature type="transmembrane region" description="Helical" evidence="1">
    <location>
        <begin position="147"/>
        <end position="169"/>
    </location>
</feature>
<feature type="transmembrane region" description="Helical" evidence="1">
    <location>
        <begin position="189"/>
        <end position="211"/>
    </location>
</feature>
<feature type="transmembrane region" description="Helical" evidence="1">
    <location>
        <begin position="223"/>
        <end position="244"/>
    </location>
</feature>
<feature type="transmembrane region" description="Helical" evidence="1">
    <location>
        <begin position="259"/>
        <end position="281"/>
    </location>
</feature>
<feature type="transmembrane region" description="Helical" evidence="1">
    <location>
        <begin position="301"/>
        <end position="323"/>
    </location>
</feature>
<feature type="transmembrane region" description="Helical" evidence="1">
    <location>
        <begin position="343"/>
        <end position="363"/>
    </location>
</feature>
<feature type="transmembrane region" description="Helical" evidence="1">
    <location>
        <begin position="376"/>
        <end position="398"/>
    </location>
</feature>
<name>YFEO_ECO57</name>
<evidence type="ECO:0000255" key="1"/>
<evidence type="ECO:0000305" key="2"/>
<sequence>MLHPRARTMLLLSLPAVAIGIASSLILIVVMKIASVLQNLLWQRLPGTLGIAQDSPLWIIGVLTLTGIAVGLVIRFSQGHAGPDPACEPLIGAPVPPSALPGLIVALILGLAGGVSLGPEHPIMTVNIALAVAIGARLLPRVNRMEWTILASAGTIGALFGTPVAAALIFSQTLNGSSEVPLWDRLFAPLMAAAAGALTTGLFFHPHFSLPIAHYGQMEMTDILSGAIVAAIAIAAGMVAVWCLPRLHAMMHQMKNPVLVLGIGGFILGILGVIGGPVSLFKGLDEMQQMVANQAFSTSDYFLLAVIKLAALVVAAASGFRGGRIFPAVFVGVALGLMLHEHVPAVPAAITVSCAILGIVLVVTRDGWLSLFMAAVVVPNTTLLPLLCIVMLPAWLLLAGKPMMMVNRPKQQPPHDNV</sequence>
<accession>P67730</accession>
<accession>P76526</accession>
<gene>
    <name type="primary">yfeO</name>
    <name type="ordered locus">Z3655</name>
    <name type="ordered locus">ECs3269</name>
</gene>